<name>RL29_GRABC</name>
<reference key="1">
    <citation type="journal article" date="2007" name="J. Bacteriol.">
        <title>Genome sequence analysis of the emerging human pathogenic acetic acid bacterium Granulibacter bethesdensis.</title>
        <authorList>
            <person name="Greenberg D.E."/>
            <person name="Porcella S.F."/>
            <person name="Zelazny A.M."/>
            <person name="Virtaneva K."/>
            <person name="Sturdevant D.E."/>
            <person name="Kupko J.J. III"/>
            <person name="Barbian K.D."/>
            <person name="Babar A."/>
            <person name="Dorward D.W."/>
            <person name="Holland S.M."/>
        </authorList>
    </citation>
    <scope>NUCLEOTIDE SEQUENCE [LARGE SCALE GENOMIC DNA]</scope>
    <source>
        <strain>ATCC BAA-1260 / CGDNIH1</strain>
    </source>
</reference>
<keyword id="KW-1185">Reference proteome</keyword>
<keyword id="KW-0687">Ribonucleoprotein</keyword>
<keyword id="KW-0689">Ribosomal protein</keyword>
<feature type="chain" id="PRO_1000059968" description="Large ribosomal subunit protein uL29">
    <location>
        <begin position="1"/>
        <end position="69"/>
    </location>
</feature>
<comment type="similarity">
    <text evidence="1">Belongs to the universal ribosomal protein uL29 family.</text>
</comment>
<dbReference type="EMBL" id="CP000394">
    <property type="protein sequence ID" value="ABI61460.1"/>
    <property type="molecule type" value="Genomic_DNA"/>
</dbReference>
<dbReference type="RefSeq" id="WP_011631269.1">
    <property type="nucleotide sequence ID" value="NC_008343.2"/>
</dbReference>
<dbReference type="SMR" id="Q0BUP2"/>
<dbReference type="STRING" id="391165.GbCGDNIH1_0562"/>
<dbReference type="GeneID" id="69744815"/>
<dbReference type="KEGG" id="gbe:GbCGDNIH1_0562"/>
<dbReference type="eggNOG" id="COG0255">
    <property type="taxonomic scope" value="Bacteria"/>
</dbReference>
<dbReference type="HOGENOM" id="CLU_158491_1_0_5"/>
<dbReference type="OrthoDB" id="9815192at2"/>
<dbReference type="Proteomes" id="UP000001963">
    <property type="component" value="Chromosome"/>
</dbReference>
<dbReference type="GO" id="GO:0022625">
    <property type="term" value="C:cytosolic large ribosomal subunit"/>
    <property type="evidence" value="ECO:0007669"/>
    <property type="project" value="TreeGrafter"/>
</dbReference>
<dbReference type="GO" id="GO:0003735">
    <property type="term" value="F:structural constituent of ribosome"/>
    <property type="evidence" value="ECO:0007669"/>
    <property type="project" value="InterPro"/>
</dbReference>
<dbReference type="GO" id="GO:0006412">
    <property type="term" value="P:translation"/>
    <property type="evidence" value="ECO:0007669"/>
    <property type="project" value="UniProtKB-UniRule"/>
</dbReference>
<dbReference type="CDD" id="cd00427">
    <property type="entry name" value="Ribosomal_L29_HIP"/>
    <property type="match status" value="1"/>
</dbReference>
<dbReference type="FunFam" id="1.10.287.310:FF:000001">
    <property type="entry name" value="50S ribosomal protein L29"/>
    <property type="match status" value="1"/>
</dbReference>
<dbReference type="Gene3D" id="1.10.287.310">
    <property type="match status" value="1"/>
</dbReference>
<dbReference type="HAMAP" id="MF_00374">
    <property type="entry name" value="Ribosomal_uL29"/>
    <property type="match status" value="1"/>
</dbReference>
<dbReference type="InterPro" id="IPR050063">
    <property type="entry name" value="Ribosomal_protein_uL29"/>
</dbReference>
<dbReference type="InterPro" id="IPR001854">
    <property type="entry name" value="Ribosomal_uL29"/>
</dbReference>
<dbReference type="InterPro" id="IPR036049">
    <property type="entry name" value="Ribosomal_uL29_sf"/>
</dbReference>
<dbReference type="NCBIfam" id="TIGR00012">
    <property type="entry name" value="L29"/>
    <property type="match status" value="1"/>
</dbReference>
<dbReference type="PANTHER" id="PTHR10916">
    <property type="entry name" value="60S RIBOSOMAL PROTEIN L35/50S RIBOSOMAL PROTEIN L29"/>
    <property type="match status" value="1"/>
</dbReference>
<dbReference type="PANTHER" id="PTHR10916:SF0">
    <property type="entry name" value="LARGE RIBOSOMAL SUBUNIT PROTEIN UL29C"/>
    <property type="match status" value="1"/>
</dbReference>
<dbReference type="Pfam" id="PF00831">
    <property type="entry name" value="Ribosomal_L29"/>
    <property type="match status" value="1"/>
</dbReference>
<dbReference type="SUPFAM" id="SSF46561">
    <property type="entry name" value="Ribosomal protein L29 (L29p)"/>
    <property type="match status" value="1"/>
</dbReference>
<sequence>MTKPADIRVKSADELGALLIDLRKEQFNLRFQQATGQLEKTGRAVQVRRDIARVKTILAERQRAAAPKA</sequence>
<proteinExistence type="inferred from homology"/>
<gene>
    <name evidence="1" type="primary">rpmC</name>
    <name type="ordered locus">GbCGDNIH1_0562</name>
</gene>
<organism>
    <name type="scientific">Granulibacter bethesdensis (strain ATCC BAA-1260 / CGDNIH1)</name>
    <dbReference type="NCBI Taxonomy" id="391165"/>
    <lineage>
        <taxon>Bacteria</taxon>
        <taxon>Pseudomonadati</taxon>
        <taxon>Pseudomonadota</taxon>
        <taxon>Alphaproteobacteria</taxon>
        <taxon>Acetobacterales</taxon>
        <taxon>Acetobacteraceae</taxon>
        <taxon>Granulibacter</taxon>
    </lineage>
</organism>
<accession>Q0BUP2</accession>
<protein>
    <recommendedName>
        <fullName evidence="1">Large ribosomal subunit protein uL29</fullName>
    </recommendedName>
    <alternativeName>
        <fullName evidence="2">50S ribosomal protein L29</fullName>
    </alternativeName>
</protein>
<evidence type="ECO:0000255" key="1">
    <source>
        <dbReference type="HAMAP-Rule" id="MF_00374"/>
    </source>
</evidence>
<evidence type="ECO:0000305" key="2"/>